<reference key="1">
    <citation type="journal article" date="1997" name="Nature">
        <title>Molecular basis of symbiosis between Rhizobium and legumes.</title>
        <authorList>
            <person name="Freiberg C.A."/>
            <person name="Fellay R."/>
            <person name="Bairoch A."/>
            <person name="Broughton W.J."/>
            <person name="Rosenthal A."/>
            <person name="Perret X."/>
        </authorList>
    </citation>
    <scope>NUCLEOTIDE SEQUENCE [LARGE SCALE GENOMIC DNA]</scope>
    <source>
        <strain>NBRC 101917 / NGR234</strain>
    </source>
</reference>
<reference key="2">
    <citation type="journal article" date="2009" name="Appl. Environ. Microbiol.">
        <title>Rhizobium sp. strain NGR234 possesses a remarkable number of secretion systems.</title>
        <authorList>
            <person name="Schmeisser C."/>
            <person name="Liesegang H."/>
            <person name="Krysciak D."/>
            <person name="Bakkou N."/>
            <person name="Le Quere A."/>
            <person name="Wollherr A."/>
            <person name="Heinemeyer I."/>
            <person name="Morgenstern B."/>
            <person name="Pommerening-Roeser A."/>
            <person name="Flores M."/>
            <person name="Palacios R."/>
            <person name="Brenner S."/>
            <person name="Gottschalk G."/>
            <person name="Schmitz R.A."/>
            <person name="Broughton W.J."/>
            <person name="Perret X."/>
            <person name="Strittmatter A.W."/>
            <person name="Streit W.R."/>
        </authorList>
    </citation>
    <scope>NUCLEOTIDE SEQUENCE [LARGE SCALE GENOMIC DNA]</scope>
    <source>
        <strain>NBRC 101917 / NGR234</strain>
    </source>
</reference>
<accession>P55420</accession>
<comment type="similarity">
    <text evidence="1">Belongs to the TraD family.</text>
</comment>
<feature type="chain" id="PRO_0000065605" description="Probable conjugal transfer protein TraD">
    <location>
        <begin position="1"/>
        <end position="71"/>
    </location>
</feature>
<organism>
    <name type="scientific">Sinorhizobium fredii (strain NBRC 101917 / NGR234)</name>
    <dbReference type="NCBI Taxonomy" id="394"/>
    <lineage>
        <taxon>Bacteria</taxon>
        <taxon>Pseudomonadati</taxon>
        <taxon>Pseudomonadota</taxon>
        <taxon>Alphaproteobacteria</taxon>
        <taxon>Hyphomicrobiales</taxon>
        <taxon>Rhizobiaceae</taxon>
        <taxon>Sinorhizobium/Ensifer group</taxon>
        <taxon>Sinorhizobium</taxon>
    </lineage>
</organism>
<keyword id="KW-0184">Conjugation</keyword>
<keyword id="KW-0614">Plasmid</keyword>
<keyword id="KW-1185">Reference proteome</keyword>
<gene>
    <name type="primary">traD</name>
    <name type="ordered locus">NGR_a03960</name>
    <name type="ORF">y4dU</name>
</gene>
<sequence length="71" mass="7773">MARSATSDARKKDTREKIELGGLIVKAGLRYEKRVLLLGALVDLSRRLNSDESERARLIAIGAEAFGDDGE</sequence>
<name>TRAD_SINFN</name>
<evidence type="ECO:0000305" key="1"/>
<geneLocation type="plasmid">
    <name>sym pNGR234a</name>
</geneLocation>
<protein>
    <recommendedName>
        <fullName>Probable conjugal transfer protein TraD</fullName>
    </recommendedName>
</protein>
<dbReference type="EMBL" id="U00090">
    <property type="protein sequence ID" value="AAB92441.1"/>
    <property type="molecule type" value="Genomic_DNA"/>
</dbReference>
<dbReference type="RefSeq" id="NP_443830.1">
    <property type="nucleotide sequence ID" value="NC_000914.2"/>
</dbReference>
<dbReference type="RefSeq" id="WP_010875408.1">
    <property type="nucleotide sequence ID" value="NC_000914.2"/>
</dbReference>
<dbReference type="KEGG" id="rhi:NGR_a03960"/>
<dbReference type="PATRIC" id="fig|394.7.peg.417"/>
<dbReference type="eggNOG" id="ENOG50343P5">
    <property type="taxonomic scope" value="Bacteria"/>
</dbReference>
<dbReference type="HOGENOM" id="CLU_182836_1_0_5"/>
<dbReference type="OrthoDB" id="5653691at2"/>
<dbReference type="Proteomes" id="UP000001054">
    <property type="component" value="Plasmid pNGR234a"/>
</dbReference>
<dbReference type="InterPro" id="IPR009444">
    <property type="entry name" value="Conjugal_tfr_TraD_a-type"/>
</dbReference>
<dbReference type="NCBIfam" id="NF010421">
    <property type="entry name" value="PRK13847.1"/>
    <property type="match status" value="1"/>
</dbReference>
<dbReference type="Pfam" id="PF06412">
    <property type="entry name" value="TraD"/>
    <property type="match status" value="1"/>
</dbReference>
<proteinExistence type="inferred from homology"/>